<accession>Q3IF20</accession>
<dbReference type="EMBL" id="CR954246">
    <property type="protein sequence ID" value="CAI85253.1"/>
    <property type="molecule type" value="Genomic_DNA"/>
</dbReference>
<dbReference type="SMR" id="Q3IF20"/>
<dbReference type="STRING" id="326442.PSHAa0149"/>
<dbReference type="KEGG" id="pha:PSHAa0149"/>
<dbReference type="eggNOG" id="COG0091">
    <property type="taxonomic scope" value="Bacteria"/>
</dbReference>
<dbReference type="HOGENOM" id="CLU_083987_3_3_6"/>
<dbReference type="BioCyc" id="PHAL326442:PSHA_RS00760-MONOMER"/>
<dbReference type="Proteomes" id="UP000006843">
    <property type="component" value="Chromosome I"/>
</dbReference>
<dbReference type="GO" id="GO:0022625">
    <property type="term" value="C:cytosolic large ribosomal subunit"/>
    <property type="evidence" value="ECO:0007669"/>
    <property type="project" value="TreeGrafter"/>
</dbReference>
<dbReference type="GO" id="GO:0019843">
    <property type="term" value="F:rRNA binding"/>
    <property type="evidence" value="ECO:0007669"/>
    <property type="project" value="UniProtKB-UniRule"/>
</dbReference>
<dbReference type="GO" id="GO:0003735">
    <property type="term" value="F:structural constituent of ribosome"/>
    <property type="evidence" value="ECO:0007669"/>
    <property type="project" value="InterPro"/>
</dbReference>
<dbReference type="GO" id="GO:0006412">
    <property type="term" value="P:translation"/>
    <property type="evidence" value="ECO:0007669"/>
    <property type="project" value="UniProtKB-UniRule"/>
</dbReference>
<dbReference type="CDD" id="cd00336">
    <property type="entry name" value="Ribosomal_L22"/>
    <property type="match status" value="1"/>
</dbReference>
<dbReference type="FunFam" id="3.90.470.10:FF:000001">
    <property type="entry name" value="50S ribosomal protein L22"/>
    <property type="match status" value="1"/>
</dbReference>
<dbReference type="Gene3D" id="3.90.470.10">
    <property type="entry name" value="Ribosomal protein L22/L17"/>
    <property type="match status" value="1"/>
</dbReference>
<dbReference type="HAMAP" id="MF_01331_B">
    <property type="entry name" value="Ribosomal_uL22_B"/>
    <property type="match status" value="1"/>
</dbReference>
<dbReference type="InterPro" id="IPR001063">
    <property type="entry name" value="Ribosomal_uL22"/>
</dbReference>
<dbReference type="InterPro" id="IPR005727">
    <property type="entry name" value="Ribosomal_uL22_bac/chlpt-type"/>
</dbReference>
<dbReference type="InterPro" id="IPR047867">
    <property type="entry name" value="Ribosomal_uL22_bac/org-type"/>
</dbReference>
<dbReference type="InterPro" id="IPR018260">
    <property type="entry name" value="Ribosomal_uL22_CS"/>
</dbReference>
<dbReference type="InterPro" id="IPR036394">
    <property type="entry name" value="Ribosomal_uL22_sf"/>
</dbReference>
<dbReference type="NCBIfam" id="TIGR01044">
    <property type="entry name" value="rplV_bact"/>
    <property type="match status" value="1"/>
</dbReference>
<dbReference type="PANTHER" id="PTHR13501">
    <property type="entry name" value="CHLOROPLAST 50S RIBOSOMAL PROTEIN L22-RELATED"/>
    <property type="match status" value="1"/>
</dbReference>
<dbReference type="PANTHER" id="PTHR13501:SF8">
    <property type="entry name" value="LARGE RIBOSOMAL SUBUNIT PROTEIN UL22M"/>
    <property type="match status" value="1"/>
</dbReference>
<dbReference type="Pfam" id="PF00237">
    <property type="entry name" value="Ribosomal_L22"/>
    <property type="match status" value="1"/>
</dbReference>
<dbReference type="SUPFAM" id="SSF54843">
    <property type="entry name" value="Ribosomal protein L22"/>
    <property type="match status" value="1"/>
</dbReference>
<dbReference type="PROSITE" id="PS00464">
    <property type="entry name" value="RIBOSOMAL_L22"/>
    <property type="match status" value="1"/>
</dbReference>
<evidence type="ECO:0000255" key="1">
    <source>
        <dbReference type="HAMAP-Rule" id="MF_01331"/>
    </source>
</evidence>
<evidence type="ECO:0000305" key="2"/>
<name>RL22_PSET1</name>
<proteinExistence type="inferred from homology"/>
<keyword id="KW-1185">Reference proteome</keyword>
<keyword id="KW-0687">Ribonucleoprotein</keyword>
<keyword id="KW-0689">Ribosomal protein</keyword>
<keyword id="KW-0694">RNA-binding</keyword>
<keyword id="KW-0699">rRNA-binding</keyword>
<organism>
    <name type="scientific">Pseudoalteromonas translucida (strain TAC 125)</name>
    <dbReference type="NCBI Taxonomy" id="326442"/>
    <lineage>
        <taxon>Bacteria</taxon>
        <taxon>Pseudomonadati</taxon>
        <taxon>Pseudomonadota</taxon>
        <taxon>Gammaproteobacteria</taxon>
        <taxon>Alteromonadales</taxon>
        <taxon>Pseudoalteromonadaceae</taxon>
        <taxon>Pseudoalteromonas</taxon>
    </lineage>
</organism>
<reference key="1">
    <citation type="journal article" date="2005" name="Genome Res.">
        <title>Coping with cold: the genome of the versatile marine Antarctica bacterium Pseudoalteromonas haloplanktis TAC125.</title>
        <authorList>
            <person name="Medigue C."/>
            <person name="Krin E."/>
            <person name="Pascal G."/>
            <person name="Barbe V."/>
            <person name="Bernsel A."/>
            <person name="Bertin P.N."/>
            <person name="Cheung F."/>
            <person name="Cruveiller S."/>
            <person name="D'Amico S."/>
            <person name="Duilio A."/>
            <person name="Fang G."/>
            <person name="Feller G."/>
            <person name="Ho C."/>
            <person name="Mangenot S."/>
            <person name="Marino G."/>
            <person name="Nilsson J."/>
            <person name="Parrilli E."/>
            <person name="Rocha E.P.C."/>
            <person name="Rouy Z."/>
            <person name="Sekowska A."/>
            <person name="Tutino M.L."/>
            <person name="Vallenet D."/>
            <person name="von Heijne G."/>
            <person name="Danchin A."/>
        </authorList>
    </citation>
    <scope>NUCLEOTIDE SEQUENCE [LARGE SCALE GENOMIC DNA]</scope>
    <source>
        <strain>TAC 125</strain>
    </source>
</reference>
<feature type="chain" id="PRO_0000243184" description="Large ribosomal subunit protein uL22">
    <location>
        <begin position="1"/>
        <end position="110"/>
    </location>
</feature>
<sequence>MQALAKHKFASGSAQKARLVADQIRGLPVDRALEILAYSPKKAAVLVKKVLESAIANAEHNEGADIDELRITTIFVDDGPTMKRIMPRAKGRADRILKRTSHITVMVSDS</sequence>
<protein>
    <recommendedName>
        <fullName evidence="1">Large ribosomal subunit protein uL22</fullName>
    </recommendedName>
    <alternativeName>
        <fullName evidence="2">50S ribosomal protein L22</fullName>
    </alternativeName>
</protein>
<gene>
    <name evidence="1" type="primary">rplV</name>
    <name type="ordered locus">PSHAa0149</name>
</gene>
<comment type="function">
    <text evidence="1">This protein binds specifically to 23S rRNA; its binding is stimulated by other ribosomal proteins, e.g. L4, L17, and L20. It is important during the early stages of 50S assembly. It makes multiple contacts with different domains of the 23S rRNA in the assembled 50S subunit and ribosome (By similarity).</text>
</comment>
<comment type="function">
    <text evidence="1">The globular domain of the protein is located near the polypeptide exit tunnel on the outside of the subunit, while an extended beta-hairpin is found that lines the wall of the exit tunnel in the center of the 70S ribosome.</text>
</comment>
<comment type="subunit">
    <text evidence="1">Part of the 50S ribosomal subunit.</text>
</comment>
<comment type="similarity">
    <text evidence="1">Belongs to the universal ribosomal protein uL22 family.</text>
</comment>